<dbReference type="EMBL" id="CH954177">
    <property type="protein sequence ID" value="EDV59376.1"/>
    <property type="molecule type" value="Genomic_DNA"/>
</dbReference>
<dbReference type="SMR" id="B3N7H1"/>
<dbReference type="EnsemblMetazoa" id="FBtr0130612">
    <property type="protein sequence ID" value="FBpp0129104"/>
    <property type="gene ID" value="FBgn0102866"/>
</dbReference>
<dbReference type="EnsemblMetazoa" id="XM_001970281.3">
    <property type="protein sequence ID" value="XP_001970317.1"/>
    <property type="gene ID" value="LOC6540719"/>
</dbReference>
<dbReference type="GeneID" id="6540719"/>
<dbReference type="KEGG" id="der:6540719"/>
<dbReference type="eggNOG" id="ENOG502TACJ">
    <property type="taxonomic scope" value="Eukaryota"/>
</dbReference>
<dbReference type="HOGENOM" id="CLU_186352_2_0_1"/>
<dbReference type="PhylomeDB" id="B3N7H1"/>
<dbReference type="Proteomes" id="UP000008711">
    <property type="component" value="Unassembled WGS sequence"/>
</dbReference>
<dbReference type="GO" id="GO:0008250">
    <property type="term" value="C:oligosaccharyltransferase complex"/>
    <property type="evidence" value="ECO:0000250"/>
    <property type="project" value="UniProtKB"/>
</dbReference>
<dbReference type="GO" id="GO:0006487">
    <property type="term" value="P:protein N-linked glycosylation"/>
    <property type="evidence" value="ECO:0000250"/>
    <property type="project" value="UniProtKB"/>
</dbReference>
<dbReference type="GO" id="GO:0018279">
    <property type="term" value="P:protein N-linked glycosylation via asparagine"/>
    <property type="evidence" value="ECO:0007669"/>
    <property type="project" value="TreeGrafter"/>
</dbReference>
<dbReference type="InterPro" id="IPR018943">
    <property type="entry name" value="Oligosaccaryltransferase"/>
</dbReference>
<dbReference type="InterPro" id="IPR051307">
    <property type="entry name" value="OST4"/>
</dbReference>
<dbReference type="InterPro" id="IPR036330">
    <property type="entry name" value="Ost4p_sf"/>
</dbReference>
<dbReference type="PANTHER" id="PTHR48164">
    <property type="entry name" value="DOLICHYL-DIPHOSPHOOLIGOSACCHARIDE--PROTEIN GLYCOSYLTRANSFERASE SUBUNIT 4"/>
    <property type="match status" value="1"/>
</dbReference>
<dbReference type="PANTHER" id="PTHR48164:SF1">
    <property type="entry name" value="DOLICHYL-DIPHOSPHOOLIGOSACCHARIDE--PROTEIN GLYCOSYLTRANSFERASE SUBUNIT 4"/>
    <property type="match status" value="1"/>
</dbReference>
<dbReference type="Pfam" id="PF10215">
    <property type="entry name" value="Ost4"/>
    <property type="match status" value="1"/>
</dbReference>
<dbReference type="SUPFAM" id="SSF103464">
    <property type="entry name" value="Oligosaccharyltransferase subunit ost4p"/>
    <property type="match status" value="1"/>
</dbReference>
<feature type="chain" id="PRO_0000386609" description="Dolichyl-diphosphooligosaccharide--protein glycosyltransferase subunit 4">
    <location>
        <begin position="1"/>
        <end position="40"/>
    </location>
</feature>
<feature type="topological domain" description="Lumenal" evidence="4">
    <location>
        <begin position="1"/>
        <end position="4"/>
    </location>
</feature>
<feature type="transmembrane region" description="Helical" evidence="4">
    <location>
        <begin position="5"/>
        <end position="25"/>
    </location>
</feature>
<feature type="topological domain" description="Cytoplasmic" evidence="4">
    <location>
        <begin position="26"/>
        <end position="40"/>
    </location>
</feature>
<sequence length="40" mass="4368">MITDVQLAIFSNVLGVFLFLLVVAYHYINANTGKPSAKAK</sequence>
<reference evidence="5" key="1">
    <citation type="journal article" date="2007" name="Nature">
        <title>Evolution of genes and genomes on the Drosophila phylogeny.</title>
        <authorList>
            <consortium name="Drosophila 12 genomes consortium"/>
        </authorList>
    </citation>
    <scope>NUCLEOTIDE SEQUENCE [LARGE SCALE GENOMIC DNA]</scope>
    <source>
        <strain evidence="5">Tucson 14021-0224.01</strain>
    </source>
</reference>
<protein>
    <recommendedName>
        <fullName evidence="3">Dolichyl-diphosphooligosaccharide--protein glycosyltransferase subunit 4</fullName>
    </recommendedName>
</protein>
<comment type="function">
    <text evidence="2">Subunit of the oligosaccharyl transferase (OST) complex that catalyzes the initial transfer of a defined glycan (Glc(3)Man(9)GlcNAc(2) in eukaryotes) from the lipid carrier dolichol-pyrophosphate to an asparagine residue within an Asn-X-Ser/Thr consensus motif in nascent polypeptide chains, the first step in protein N-glycosylation. N-glycosylation occurs cotranslationally and the complex associates with the Sec61 complex at the channel-forming translocon complex that mediates protein translocation across the endoplasmic reticulum (ER). All subunits are required for a maximal enzyme activity.</text>
</comment>
<comment type="subunit">
    <text evidence="2">Component of the oligosaccharyltransferase (OST) complex.</text>
</comment>
<comment type="subcellular location">
    <subcellularLocation>
        <location evidence="1">Endoplasmic reticulum membrane</location>
        <topology evidence="1">Single-pass type III membrane protein</topology>
    </subcellularLocation>
</comment>
<comment type="similarity">
    <text evidence="4">Belongs to the OST4 family.</text>
</comment>
<organism>
    <name type="scientific">Drosophila erecta</name>
    <name type="common">Fruit fly</name>
    <dbReference type="NCBI Taxonomy" id="7220"/>
    <lineage>
        <taxon>Eukaryota</taxon>
        <taxon>Metazoa</taxon>
        <taxon>Ecdysozoa</taxon>
        <taxon>Arthropoda</taxon>
        <taxon>Hexapoda</taxon>
        <taxon>Insecta</taxon>
        <taxon>Pterygota</taxon>
        <taxon>Neoptera</taxon>
        <taxon>Endopterygota</taxon>
        <taxon>Diptera</taxon>
        <taxon>Brachycera</taxon>
        <taxon>Muscomorpha</taxon>
        <taxon>Ephydroidea</taxon>
        <taxon>Drosophilidae</taxon>
        <taxon>Drosophila</taxon>
        <taxon>Sophophora</taxon>
    </lineage>
</organism>
<name>OST4_DROER</name>
<accession>B3N7H1</accession>
<evidence type="ECO:0000250" key="1"/>
<evidence type="ECO:0000250" key="2">
    <source>
        <dbReference type="UniProtKB" id="P0C6T2"/>
    </source>
</evidence>
<evidence type="ECO:0000250" key="3">
    <source>
        <dbReference type="UniProtKB" id="Q99380"/>
    </source>
</evidence>
<evidence type="ECO:0000255" key="4"/>
<evidence type="ECO:0000312" key="5">
    <source>
        <dbReference type="EMBL" id="EDV59376.1"/>
    </source>
</evidence>
<keyword id="KW-0256">Endoplasmic reticulum</keyword>
<keyword id="KW-0472">Membrane</keyword>
<keyword id="KW-0735">Signal-anchor</keyword>
<keyword id="KW-0812">Transmembrane</keyword>
<keyword id="KW-1133">Transmembrane helix</keyword>
<gene>
    <name type="ORF">GG10558</name>
</gene>
<proteinExistence type="inferred from homology"/>